<feature type="chain" id="PRO_1000095280" description="Aspartyl/glutamyl-tRNA(Asn/Gln) amidotransferase subunit C">
    <location>
        <begin position="1"/>
        <end position="98"/>
    </location>
</feature>
<feature type="region of interest" description="Disordered" evidence="2">
    <location>
        <begin position="77"/>
        <end position="98"/>
    </location>
</feature>
<protein>
    <recommendedName>
        <fullName evidence="1">Aspartyl/glutamyl-tRNA(Asn/Gln) amidotransferase subunit C</fullName>
        <shortName evidence="1">Asp/Glu-ADT subunit C</shortName>
        <ecNumber evidence="1">6.3.5.-</ecNumber>
    </recommendedName>
</protein>
<keyword id="KW-0067">ATP-binding</keyword>
<keyword id="KW-0436">Ligase</keyword>
<keyword id="KW-0547">Nucleotide-binding</keyword>
<keyword id="KW-0648">Protein biosynthesis</keyword>
<keyword id="KW-1185">Reference proteome</keyword>
<accession>B1X0Z4</accession>
<name>GATC_CROS5</name>
<organism>
    <name type="scientific">Crocosphaera subtropica (strain ATCC 51142 / BH68)</name>
    <name type="common">Cyanothece sp. (strain ATCC 51142)</name>
    <dbReference type="NCBI Taxonomy" id="43989"/>
    <lineage>
        <taxon>Bacteria</taxon>
        <taxon>Bacillati</taxon>
        <taxon>Cyanobacteriota</taxon>
        <taxon>Cyanophyceae</taxon>
        <taxon>Oscillatoriophycideae</taxon>
        <taxon>Chroococcales</taxon>
        <taxon>Aphanothecaceae</taxon>
        <taxon>Crocosphaera</taxon>
        <taxon>Crocosphaera subtropica</taxon>
    </lineage>
</organism>
<dbReference type="EC" id="6.3.5.-" evidence="1"/>
<dbReference type="EMBL" id="CP000806">
    <property type="protein sequence ID" value="ACB49635.1"/>
    <property type="molecule type" value="Genomic_DNA"/>
</dbReference>
<dbReference type="RefSeq" id="WP_009546777.1">
    <property type="nucleotide sequence ID" value="NC_010546.1"/>
</dbReference>
<dbReference type="SMR" id="B1X0Z4"/>
<dbReference type="STRING" id="43989.cce_0284"/>
<dbReference type="KEGG" id="cyt:cce_0284"/>
<dbReference type="eggNOG" id="COG0721">
    <property type="taxonomic scope" value="Bacteria"/>
</dbReference>
<dbReference type="HOGENOM" id="CLU_105899_2_0_3"/>
<dbReference type="OrthoDB" id="9813938at2"/>
<dbReference type="Proteomes" id="UP000001203">
    <property type="component" value="Chromosome circular"/>
</dbReference>
<dbReference type="GO" id="GO:0050566">
    <property type="term" value="F:asparaginyl-tRNA synthase (glutamine-hydrolyzing) activity"/>
    <property type="evidence" value="ECO:0007669"/>
    <property type="project" value="RHEA"/>
</dbReference>
<dbReference type="GO" id="GO:0005524">
    <property type="term" value="F:ATP binding"/>
    <property type="evidence" value="ECO:0007669"/>
    <property type="project" value="UniProtKB-KW"/>
</dbReference>
<dbReference type="GO" id="GO:0050567">
    <property type="term" value="F:glutaminyl-tRNA synthase (glutamine-hydrolyzing) activity"/>
    <property type="evidence" value="ECO:0007669"/>
    <property type="project" value="UniProtKB-UniRule"/>
</dbReference>
<dbReference type="GO" id="GO:0070681">
    <property type="term" value="P:glutaminyl-tRNAGln biosynthesis via transamidation"/>
    <property type="evidence" value="ECO:0007669"/>
    <property type="project" value="TreeGrafter"/>
</dbReference>
<dbReference type="GO" id="GO:0006450">
    <property type="term" value="P:regulation of translational fidelity"/>
    <property type="evidence" value="ECO:0007669"/>
    <property type="project" value="InterPro"/>
</dbReference>
<dbReference type="GO" id="GO:0006412">
    <property type="term" value="P:translation"/>
    <property type="evidence" value="ECO:0007669"/>
    <property type="project" value="UniProtKB-UniRule"/>
</dbReference>
<dbReference type="Gene3D" id="1.10.20.60">
    <property type="entry name" value="Glu-tRNAGln amidotransferase C subunit, N-terminal domain"/>
    <property type="match status" value="1"/>
</dbReference>
<dbReference type="HAMAP" id="MF_00122">
    <property type="entry name" value="GatC"/>
    <property type="match status" value="1"/>
</dbReference>
<dbReference type="InterPro" id="IPR036113">
    <property type="entry name" value="Asp/Glu-ADT_sf_sub_c"/>
</dbReference>
<dbReference type="InterPro" id="IPR003837">
    <property type="entry name" value="GatC"/>
</dbReference>
<dbReference type="NCBIfam" id="TIGR00135">
    <property type="entry name" value="gatC"/>
    <property type="match status" value="1"/>
</dbReference>
<dbReference type="PANTHER" id="PTHR15004">
    <property type="entry name" value="GLUTAMYL-TRNA(GLN) AMIDOTRANSFERASE SUBUNIT C, MITOCHONDRIAL"/>
    <property type="match status" value="1"/>
</dbReference>
<dbReference type="PANTHER" id="PTHR15004:SF0">
    <property type="entry name" value="GLUTAMYL-TRNA(GLN) AMIDOTRANSFERASE SUBUNIT C, MITOCHONDRIAL"/>
    <property type="match status" value="1"/>
</dbReference>
<dbReference type="Pfam" id="PF02686">
    <property type="entry name" value="GatC"/>
    <property type="match status" value="1"/>
</dbReference>
<dbReference type="SUPFAM" id="SSF141000">
    <property type="entry name" value="Glu-tRNAGln amidotransferase C subunit"/>
    <property type="match status" value="1"/>
</dbReference>
<gene>
    <name evidence="1" type="primary">gatC</name>
    <name type="ordered locus">cce_0284</name>
</gene>
<evidence type="ECO:0000255" key="1">
    <source>
        <dbReference type="HAMAP-Rule" id="MF_00122"/>
    </source>
</evidence>
<evidence type="ECO:0000256" key="2">
    <source>
        <dbReference type="SAM" id="MobiDB-lite"/>
    </source>
</evidence>
<proteinExistence type="inferred from homology"/>
<reference key="1">
    <citation type="journal article" date="2008" name="Proc. Natl. Acad. Sci. U.S.A.">
        <title>The genome of Cyanothece 51142, a unicellular diazotrophic cyanobacterium important in the marine nitrogen cycle.</title>
        <authorList>
            <person name="Welsh E.A."/>
            <person name="Liberton M."/>
            <person name="Stoeckel J."/>
            <person name="Loh T."/>
            <person name="Elvitigala T."/>
            <person name="Wang C."/>
            <person name="Wollam A."/>
            <person name="Fulton R.S."/>
            <person name="Clifton S.W."/>
            <person name="Jacobs J.M."/>
            <person name="Aurora R."/>
            <person name="Ghosh B.K."/>
            <person name="Sherman L.A."/>
            <person name="Smith R.D."/>
            <person name="Wilson R.K."/>
            <person name="Pakrasi H.B."/>
        </authorList>
    </citation>
    <scope>NUCLEOTIDE SEQUENCE [LARGE SCALE GENOMIC DNA]</scope>
    <source>
        <strain>ATCC 51142 / BH68</strain>
    </source>
</reference>
<comment type="function">
    <text evidence="1">Allows the formation of correctly charged Asn-tRNA(Asn) or Gln-tRNA(Gln) through the transamidation of misacylated Asp-tRNA(Asn) or Glu-tRNA(Gln) in organisms which lack either or both of asparaginyl-tRNA or glutaminyl-tRNA synthetases. The reaction takes place in the presence of glutamine and ATP through an activated phospho-Asp-tRNA(Asn) or phospho-Glu-tRNA(Gln).</text>
</comment>
<comment type="catalytic activity">
    <reaction evidence="1">
        <text>L-glutamyl-tRNA(Gln) + L-glutamine + ATP + H2O = L-glutaminyl-tRNA(Gln) + L-glutamate + ADP + phosphate + H(+)</text>
        <dbReference type="Rhea" id="RHEA:17521"/>
        <dbReference type="Rhea" id="RHEA-COMP:9681"/>
        <dbReference type="Rhea" id="RHEA-COMP:9684"/>
        <dbReference type="ChEBI" id="CHEBI:15377"/>
        <dbReference type="ChEBI" id="CHEBI:15378"/>
        <dbReference type="ChEBI" id="CHEBI:29985"/>
        <dbReference type="ChEBI" id="CHEBI:30616"/>
        <dbReference type="ChEBI" id="CHEBI:43474"/>
        <dbReference type="ChEBI" id="CHEBI:58359"/>
        <dbReference type="ChEBI" id="CHEBI:78520"/>
        <dbReference type="ChEBI" id="CHEBI:78521"/>
        <dbReference type="ChEBI" id="CHEBI:456216"/>
    </reaction>
</comment>
<comment type="catalytic activity">
    <reaction evidence="1">
        <text>L-aspartyl-tRNA(Asn) + L-glutamine + ATP + H2O = L-asparaginyl-tRNA(Asn) + L-glutamate + ADP + phosphate + 2 H(+)</text>
        <dbReference type="Rhea" id="RHEA:14513"/>
        <dbReference type="Rhea" id="RHEA-COMP:9674"/>
        <dbReference type="Rhea" id="RHEA-COMP:9677"/>
        <dbReference type="ChEBI" id="CHEBI:15377"/>
        <dbReference type="ChEBI" id="CHEBI:15378"/>
        <dbReference type="ChEBI" id="CHEBI:29985"/>
        <dbReference type="ChEBI" id="CHEBI:30616"/>
        <dbReference type="ChEBI" id="CHEBI:43474"/>
        <dbReference type="ChEBI" id="CHEBI:58359"/>
        <dbReference type="ChEBI" id="CHEBI:78515"/>
        <dbReference type="ChEBI" id="CHEBI:78516"/>
        <dbReference type="ChEBI" id="CHEBI:456216"/>
    </reaction>
</comment>
<comment type="subunit">
    <text evidence="1">Heterotrimer of A, B and C subunits.</text>
</comment>
<comment type="similarity">
    <text evidence="1">Belongs to the GatC family.</text>
</comment>
<sequence>MLDRQQVQKIAHLARLDITSEEEEKFADQLSDILDYFEQLSELDTENVPPTTRAIELSNITRQDSFELYHDRDALLNEAPNPEGDFFRVPQILNTDEE</sequence>